<accession>P07322</accession>
<reference key="1">
    <citation type="journal article" date="1995" name="J. Biochem.">
        <title>Chicken alpha-enolase but not beta-enolase has a Src-dependent tyrosine-phosphorylation site: cDNA cloning and nucleotide sequence analysis.</title>
        <authorList>
            <person name="Tanaka M."/>
            <person name="Maeda K."/>
            <person name="Nakashima K."/>
        </authorList>
    </citation>
    <scope>NUCLEOTIDE SEQUENCE [MRNA]</scope>
    <source>
        <strain>White leghorn</strain>
        <tissue>Muscle</tissue>
    </source>
</reference>
<reference key="2">
    <citation type="journal article" date="1986" name="Biochem. J.">
        <title>The complete amino acid sequence of chicken skeletal-muscle enolase.</title>
        <authorList>
            <person name="Russell G.A."/>
            <person name="Dunbar B."/>
            <person name="Fothergill-Gilmore L.A."/>
        </authorList>
    </citation>
    <scope>PROTEIN SEQUENCE OF 2-434</scope>
</reference>
<reference key="3">
    <citation type="journal article" date="1988" name="Anal. Biochem.">
        <title>Structural elucidation of N-terminal post-translational modifications by mass spectrometry: application to chicken enolase and the alpha- and beta-subunits of bovine mitochondrial F1-ATPase.</title>
        <authorList>
            <person name="Gibson B.W."/>
            <person name="Daley D.J."/>
            <person name="Williams D.H."/>
        </authorList>
    </citation>
    <scope>ACETYLATION AT SER-2</scope>
</reference>
<comment type="function">
    <text evidence="2">Glycolytic enzyme that catalyzes the conversion of 2-phosphoglycerate to phosphoenolpyruvate.</text>
</comment>
<comment type="catalytic activity">
    <reaction evidence="2">
        <text>(2R)-2-phosphoglycerate = phosphoenolpyruvate + H2O</text>
        <dbReference type="Rhea" id="RHEA:10164"/>
        <dbReference type="ChEBI" id="CHEBI:15377"/>
        <dbReference type="ChEBI" id="CHEBI:58289"/>
        <dbReference type="ChEBI" id="CHEBI:58702"/>
        <dbReference type="EC" id="4.2.1.11"/>
    </reaction>
    <physiologicalReaction direction="left-to-right" evidence="2">
        <dbReference type="Rhea" id="RHEA:10165"/>
    </physiologicalReaction>
</comment>
<comment type="cofactor">
    <cofactor>
        <name>Mg(2+)</name>
        <dbReference type="ChEBI" id="CHEBI:18420"/>
    </cofactor>
    <text>Mg(2+) is required for catalysis and for stabilizing the dimer.</text>
</comment>
<comment type="pathway">
    <text evidence="2">Carbohydrate degradation; glycolysis; pyruvate from D-glyceraldehyde 3-phosphate: step 4/5.</text>
</comment>
<comment type="subunit">
    <text evidence="1">Homodimer. Interacts with PNKD (By similarity).</text>
</comment>
<comment type="subcellular location">
    <subcellularLocation>
        <location>Cytoplasm</location>
    </subcellularLocation>
</comment>
<comment type="similarity">
    <text evidence="5">Belongs to the enolase family.</text>
</comment>
<keyword id="KW-0007">Acetylation</keyword>
<keyword id="KW-0963">Cytoplasm</keyword>
<keyword id="KW-0903">Direct protein sequencing</keyword>
<keyword id="KW-0324">Glycolysis</keyword>
<keyword id="KW-0456">Lyase</keyword>
<keyword id="KW-0460">Magnesium</keyword>
<keyword id="KW-0479">Metal-binding</keyword>
<keyword id="KW-1185">Reference proteome</keyword>
<name>ENOB_CHICK</name>
<dbReference type="EC" id="4.2.1.11" evidence="2"/>
<dbReference type="EMBL" id="D37901">
    <property type="protein sequence ID" value="BAA07133.1"/>
    <property type="molecule type" value="mRNA"/>
</dbReference>
<dbReference type="PIR" id="A23850">
    <property type="entry name" value="A23850"/>
</dbReference>
<dbReference type="PIR" id="JC4187">
    <property type="entry name" value="JC4187"/>
</dbReference>
<dbReference type="RefSeq" id="NP_990450.1">
    <property type="nucleotide sequence ID" value="NM_205119.1"/>
</dbReference>
<dbReference type="SMR" id="P07322"/>
<dbReference type="FunCoup" id="P07322">
    <property type="interactions" value="1814"/>
</dbReference>
<dbReference type="Allergome" id="11939">
    <property type="allergen name" value="Gal d 9"/>
</dbReference>
<dbReference type="Allergome" id="11940">
    <property type="allergen name" value="Gal d 9.0101"/>
</dbReference>
<dbReference type="iPTMnet" id="P07322"/>
<dbReference type="GeneID" id="396016"/>
<dbReference type="CTD" id="2027"/>
<dbReference type="VEuPathDB" id="HostDB:geneid_396017"/>
<dbReference type="InParanoid" id="P07322"/>
<dbReference type="PhylomeDB" id="P07322"/>
<dbReference type="Reactome" id="R-GGA-352875">
    <property type="pathway name" value="Gluconeogenesis"/>
</dbReference>
<dbReference type="Reactome" id="R-GGA-352882">
    <property type="pathway name" value="Glycolysis"/>
</dbReference>
<dbReference type="UniPathway" id="UPA00109">
    <property type="reaction ID" value="UER00187"/>
</dbReference>
<dbReference type="PRO" id="PR:P07322"/>
<dbReference type="Proteomes" id="UP000000539">
    <property type="component" value="Unassembled WGS sequence"/>
</dbReference>
<dbReference type="GO" id="GO:0005829">
    <property type="term" value="C:cytosol"/>
    <property type="evidence" value="ECO:0000304"/>
    <property type="project" value="Reactome"/>
</dbReference>
<dbReference type="GO" id="GO:0000015">
    <property type="term" value="C:phosphopyruvate hydratase complex"/>
    <property type="evidence" value="ECO:0000318"/>
    <property type="project" value="GO_Central"/>
</dbReference>
<dbReference type="GO" id="GO:0000287">
    <property type="term" value="F:magnesium ion binding"/>
    <property type="evidence" value="ECO:0007669"/>
    <property type="project" value="InterPro"/>
</dbReference>
<dbReference type="GO" id="GO:0004634">
    <property type="term" value="F:phosphopyruvate hydratase activity"/>
    <property type="evidence" value="ECO:0000318"/>
    <property type="project" value="GO_Central"/>
</dbReference>
<dbReference type="GO" id="GO:0006096">
    <property type="term" value="P:glycolytic process"/>
    <property type="evidence" value="ECO:0000318"/>
    <property type="project" value="GO_Central"/>
</dbReference>
<dbReference type="CDD" id="cd03313">
    <property type="entry name" value="enolase"/>
    <property type="match status" value="1"/>
</dbReference>
<dbReference type="FunFam" id="3.30.390.10:FF:000001">
    <property type="entry name" value="Enolase"/>
    <property type="match status" value="1"/>
</dbReference>
<dbReference type="FunFam" id="3.20.20.120:FF:000002">
    <property type="entry name" value="Enolase 1"/>
    <property type="match status" value="1"/>
</dbReference>
<dbReference type="Gene3D" id="3.20.20.120">
    <property type="entry name" value="Enolase-like C-terminal domain"/>
    <property type="match status" value="1"/>
</dbReference>
<dbReference type="Gene3D" id="3.30.390.10">
    <property type="entry name" value="Enolase-like, N-terminal domain"/>
    <property type="match status" value="1"/>
</dbReference>
<dbReference type="HAMAP" id="MF_00318">
    <property type="entry name" value="Enolase"/>
    <property type="match status" value="1"/>
</dbReference>
<dbReference type="InterPro" id="IPR000941">
    <property type="entry name" value="Enolase"/>
</dbReference>
<dbReference type="InterPro" id="IPR036849">
    <property type="entry name" value="Enolase-like_C_sf"/>
</dbReference>
<dbReference type="InterPro" id="IPR029017">
    <property type="entry name" value="Enolase-like_N"/>
</dbReference>
<dbReference type="InterPro" id="IPR020810">
    <property type="entry name" value="Enolase_C"/>
</dbReference>
<dbReference type="InterPro" id="IPR020809">
    <property type="entry name" value="Enolase_CS"/>
</dbReference>
<dbReference type="InterPro" id="IPR020811">
    <property type="entry name" value="Enolase_N"/>
</dbReference>
<dbReference type="NCBIfam" id="TIGR01060">
    <property type="entry name" value="eno"/>
    <property type="match status" value="1"/>
</dbReference>
<dbReference type="PANTHER" id="PTHR11902:SF5">
    <property type="entry name" value="BETA-ENOLASE"/>
    <property type="match status" value="1"/>
</dbReference>
<dbReference type="PANTHER" id="PTHR11902">
    <property type="entry name" value="ENOLASE"/>
    <property type="match status" value="1"/>
</dbReference>
<dbReference type="Pfam" id="PF00113">
    <property type="entry name" value="Enolase_C"/>
    <property type="match status" value="1"/>
</dbReference>
<dbReference type="Pfam" id="PF03952">
    <property type="entry name" value="Enolase_N"/>
    <property type="match status" value="1"/>
</dbReference>
<dbReference type="PIRSF" id="PIRSF001400">
    <property type="entry name" value="Enolase"/>
    <property type="match status" value="1"/>
</dbReference>
<dbReference type="PRINTS" id="PR00148">
    <property type="entry name" value="ENOLASE"/>
</dbReference>
<dbReference type="SFLD" id="SFLDS00001">
    <property type="entry name" value="Enolase"/>
    <property type="match status" value="1"/>
</dbReference>
<dbReference type="SFLD" id="SFLDF00002">
    <property type="entry name" value="enolase"/>
    <property type="match status" value="1"/>
</dbReference>
<dbReference type="SMART" id="SM01192">
    <property type="entry name" value="Enolase_C"/>
    <property type="match status" value="1"/>
</dbReference>
<dbReference type="SMART" id="SM01193">
    <property type="entry name" value="Enolase_N"/>
    <property type="match status" value="1"/>
</dbReference>
<dbReference type="SUPFAM" id="SSF51604">
    <property type="entry name" value="Enolase C-terminal domain-like"/>
    <property type="match status" value="1"/>
</dbReference>
<dbReference type="SUPFAM" id="SSF54826">
    <property type="entry name" value="Enolase N-terminal domain-like"/>
    <property type="match status" value="1"/>
</dbReference>
<dbReference type="PROSITE" id="PS00164">
    <property type="entry name" value="ENOLASE"/>
    <property type="match status" value="1"/>
</dbReference>
<evidence type="ECO:0000250" key="1"/>
<evidence type="ECO:0000250" key="2">
    <source>
        <dbReference type="UniProtKB" id="P15429"/>
    </source>
</evidence>
<evidence type="ECO:0000269" key="3">
    <source>
    </source>
</evidence>
<evidence type="ECO:0000269" key="4">
    <source>
    </source>
</evidence>
<evidence type="ECO:0000305" key="5"/>
<gene>
    <name type="primary">ENO3</name>
</gene>
<protein>
    <recommendedName>
        <fullName>Beta-enolase</fullName>
        <ecNumber evidence="2">4.2.1.11</ecNumber>
    </recommendedName>
    <alternativeName>
        <fullName>2-phospho-D-glycerate hydro-lyase</fullName>
    </alternativeName>
    <alternativeName>
        <fullName>Phosphopyruvate hydratase</fullName>
    </alternativeName>
</protein>
<feature type="initiator methionine" description="Removed" evidence="3 4">
    <location>
        <position position="1"/>
    </location>
</feature>
<feature type="chain" id="PRO_0000134111" description="Beta-enolase">
    <location>
        <begin position="2"/>
        <end position="434"/>
    </location>
</feature>
<feature type="active site" description="Proton donor" evidence="1">
    <location>
        <position position="210"/>
    </location>
</feature>
<feature type="active site" description="Proton acceptor" evidence="1">
    <location>
        <position position="343"/>
    </location>
</feature>
<feature type="binding site" evidence="1">
    <location>
        <position position="158"/>
    </location>
    <ligand>
        <name>substrate</name>
    </ligand>
</feature>
<feature type="binding site" evidence="1">
    <location>
        <position position="167"/>
    </location>
    <ligand>
        <name>substrate</name>
    </ligand>
</feature>
<feature type="binding site" evidence="1">
    <location>
        <position position="245"/>
    </location>
    <ligand>
        <name>Mg(2+)</name>
        <dbReference type="ChEBI" id="CHEBI:18420"/>
    </ligand>
</feature>
<feature type="binding site" evidence="1">
    <location>
        <position position="293"/>
    </location>
    <ligand>
        <name>Mg(2+)</name>
        <dbReference type="ChEBI" id="CHEBI:18420"/>
    </ligand>
</feature>
<feature type="binding site" evidence="1">
    <location>
        <position position="293"/>
    </location>
    <ligand>
        <name>substrate</name>
    </ligand>
</feature>
<feature type="binding site" evidence="1">
    <location>
        <position position="318"/>
    </location>
    <ligand>
        <name>Mg(2+)</name>
        <dbReference type="ChEBI" id="CHEBI:18420"/>
    </ligand>
</feature>
<feature type="binding site" evidence="1">
    <location>
        <position position="318"/>
    </location>
    <ligand>
        <name>substrate</name>
    </ligand>
</feature>
<feature type="binding site" evidence="1">
    <location>
        <begin position="370"/>
        <end position="373"/>
    </location>
    <ligand>
        <name>substrate</name>
    </ligand>
</feature>
<feature type="binding site" evidence="1">
    <location>
        <position position="394"/>
    </location>
    <ligand>
        <name>substrate</name>
    </ligand>
</feature>
<feature type="modified residue" description="N-acetylserine" evidence="3">
    <location>
        <position position="2"/>
    </location>
</feature>
<feature type="sequence conflict" description="In Ref. 2; AA sequence." evidence="5" ref="2">
    <original>E</original>
    <variation>D</variation>
    <location>
        <position position="17"/>
    </location>
</feature>
<feature type="sequence conflict" description="In Ref. 2; AA sequence." evidence="5" ref="2">
    <original>P</original>
    <variation>L</variation>
    <location>
        <position position="49"/>
    </location>
</feature>
<feature type="sequence conflict" description="In Ref. 2; AA sequence." evidence="5" ref="2">
    <original>M</original>
    <variation>V</variation>
    <location>
        <position position="94"/>
    </location>
</feature>
<feature type="sequence conflict" description="In Ref. 2; AA sequence." evidence="5" ref="2">
    <original>CK</original>
    <variation>SH</variation>
    <location>
        <begin position="119"/>
        <end position="120"/>
    </location>
</feature>
<feature type="sequence conflict" description="In Ref. 2; AA sequence." evidence="5" ref="2">
    <original>G</original>
    <variation>D</variation>
    <location>
        <position position="209"/>
    </location>
</feature>
<feature type="sequence conflict" description="In Ref. 2; AA sequence." evidence="5" ref="2">
    <original>H</original>
    <variation>D</variation>
    <location>
        <position position="258"/>
    </location>
</feature>
<feature type="sequence conflict" description="In Ref. 2; AA sequence." evidence="5" ref="2">
    <original>HT</original>
    <variation>DP</variation>
    <location>
        <begin position="266"/>
        <end position="267"/>
    </location>
</feature>
<feature type="sequence conflict" description="In Ref. 2; AA sequence." evidence="5" ref="2">
    <original>Y</original>
    <variation>L</variation>
    <location>
        <position position="270"/>
    </location>
</feature>
<feature type="sequence conflict" description="In Ref. 2; AA sequence." evidence="5" ref="2">
    <original>F</original>
    <variation>S</variation>
    <location>
        <position position="309"/>
    </location>
</feature>
<feature type="sequence conflict" description="In Ref. 2; AA sequence." evidence="5" ref="2">
    <original>T</original>
    <variation>A</variation>
    <location>
        <position position="323"/>
    </location>
</feature>
<feature type="sequence conflict" description="In Ref. 2; AA sequence." evidence="5" ref="2">
    <original>G</original>
    <variation>A</variation>
    <location>
        <position position="331"/>
    </location>
</feature>
<feature type="sequence conflict" description="In Ref. 2; AA sequence." evidence="5" ref="2">
    <original>K</original>
    <variation>G</variation>
    <location>
        <position position="343"/>
    </location>
</feature>
<feature type="sequence conflict" description="In Ref. 2; AA sequence." evidence="5" ref="2">
    <original>KT</original>
    <variation>EQ</variation>
    <location>
        <begin position="394"/>
        <end position="395"/>
    </location>
</feature>
<proteinExistence type="evidence at protein level"/>
<sequence>MSIQKIHAREILDSRGEPTVEVDLHTAKGHFRAAVPSGASTGIHEALEPRDGDKKRFLGKGVLKAVEHINKTIGPALIEKKISVVEQEKIDKVMIEMDGTENKSKFGANAILGVSLAVCKAGAAEKGVPLYRHIADLAGNTELILPVPAFNVINGGSHAGNKLAMQEFMVLPVGAASFHDAMRVGAEVYHSLKGVIKAKYGKDATNVGGEGGFAPNILDNHEALELLKAAIAQAGYTDKVVIGMDVAASEFCRDGRYHLDFKSPPHTKRYITGEQLGEIYRGFIKDYPVVSIEDPFDQDDWEAWKRFVFHVDIQVVGDDLTVTNPKRIAHGAEQHACNCLLLKVNQIGSVTESIQACKLAQSHGWGVMVSHRSGETEDTFIADLVVGLCTGQIKTGAPCRSERLAKYNQLMRIEEALGDKAKFAGRKFRNPKAK</sequence>
<organism>
    <name type="scientific">Gallus gallus</name>
    <name type="common">Chicken</name>
    <dbReference type="NCBI Taxonomy" id="9031"/>
    <lineage>
        <taxon>Eukaryota</taxon>
        <taxon>Metazoa</taxon>
        <taxon>Chordata</taxon>
        <taxon>Craniata</taxon>
        <taxon>Vertebrata</taxon>
        <taxon>Euteleostomi</taxon>
        <taxon>Archelosauria</taxon>
        <taxon>Archosauria</taxon>
        <taxon>Dinosauria</taxon>
        <taxon>Saurischia</taxon>
        <taxon>Theropoda</taxon>
        <taxon>Coelurosauria</taxon>
        <taxon>Aves</taxon>
        <taxon>Neognathae</taxon>
        <taxon>Galloanserae</taxon>
        <taxon>Galliformes</taxon>
        <taxon>Phasianidae</taxon>
        <taxon>Phasianinae</taxon>
        <taxon>Gallus</taxon>
    </lineage>
</organism>